<name>RPB4_DROME</name>
<reference evidence="8 9" key="1">
    <citation type="journal article" date="2003" name="Mol. Cell. Biol.">
        <title>Two different Drosophila ADA2 homologues are present in distinct GCN5 histone acetyltransferase-containing complexes.</title>
        <authorList>
            <person name="Muratoglu S."/>
            <person name="Georgieva S."/>
            <person name="Papai G."/>
            <person name="Scheer E."/>
            <person name="Enunlu I."/>
            <person name="Komonyi O."/>
            <person name="Cserpan I."/>
            <person name="Lebedeva L."/>
            <person name="Nabirochkina E."/>
            <person name="Udvardy A."/>
            <person name="Tora L."/>
            <person name="Boros I."/>
        </authorList>
    </citation>
    <scope>NUCLEOTIDE SEQUENCE [MRNA]</scope>
    <scope>SUBCELLULAR LOCATION</scope>
</reference>
<reference key="2">
    <citation type="journal article" date="2000" name="Science">
        <title>The genome sequence of Drosophila melanogaster.</title>
        <authorList>
            <person name="Adams M.D."/>
            <person name="Celniker S.E."/>
            <person name="Holt R.A."/>
            <person name="Evans C.A."/>
            <person name="Gocayne J.D."/>
            <person name="Amanatides P.G."/>
            <person name="Scherer S.E."/>
            <person name="Li P.W."/>
            <person name="Hoskins R.A."/>
            <person name="Galle R.F."/>
            <person name="George R.A."/>
            <person name="Lewis S.E."/>
            <person name="Richards S."/>
            <person name="Ashburner M."/>
            <person name="Henderson S.N."/>
            <person name="Sutton G.G."/>
            <person name="Wortman J.R."/>
            <person name="Yandell M.D."/>
            <person name="Zhang Q."/>
            <person name="Chen L.X."/>
            <person name="Brandon R.C."/>
            <person name="Rogers Y.-H.C."/>
            <person name="Blazej R.G."/>
            <person name="Champe M."/>
            <person name="Pfeiffer B.D."/>
            <person name="Wan K.H."/>
            <person name="Doyle C."/>
            <person name="Baxter E.G."/>
            <person name="Helt G."/>
            <person name="Nelson C.R."/>
            <person name="Miklos G.L.G."/>
            <person name="Abril J.F."/>
            <person name="Agbayani A."/>
            <person name="An H.-J."/>
            <person name="Andrews-Pfannkoch C."/>
            <person name="Baldwin D."/>
            <person name="Ballew R.M."/>
            <person name="Basu A."/>
            <person name="Baxendale J."/>
            <person name="Bayraktaroglu L."/>
            <person name="Beasley E.M."/>
            <person name="Beeson K.Y."/>
            <person name="Benos P.V."/>
            <person name="Berman B.P."/>
            <person name="Bhandari D."/>
            <person name="Bolshakov S."/>
            <person name="Borkova D."/>
            <person name="Botchan M.R."/>
            <person name="Bouck J."/>
            <person name="Brokstein P."/>
            <person name="Brottier P."/>
            <person name="Burtis K.C."/>
            <person name="Busam D.A."/>
            <person name="Butler H."/>
            <person name="Cadieu E."/>
            <person name="Center A."/>
            <person name="Chandra I."/>
            <person name="Cherry J.M."/>
            <person name="Cawley S."/>
            <person name="Dahlke C."/>
            <person name="Davenport L.B."/>
            <person name="Davies P."/>
            <person name="de Pablos B."/>
            <person name="Delcher A."/>
            <person name="Deng Z."/>
            <person name="Mays A.D."/>
            <person name="Dew I."/>
            <person name="Dietz S.M."/>
            <person name="Dodson K."/>
            <person name="Doup L.E."/>
            <person name="Downes M."/>
            <person name="Dugan-Rocha S."/>
            <person name="Dunkov B.C."/>
            <person name="Dunn P."/>
            <person name="Durbin K.J."/>
            <person name="Evangelista C.C."/>
            <person name="Ferraz C."/>
            <person name="Ferriera S."/>
            <person name="Fleischmann W."/>
            <person name="Fosler C."/>
            <person name="Gabrielian A.E."/>
            <person name="Garg N.S."/>
            <person name="Gelbart W.M."/>
            <person name="Glasser K."/>
            <person name="Glodek A."/>
            <person name="Gong F."/>
            <person name="Gorrell J.H."/>
            <person name="Gu Z."/>
            <person name="Guan P."/>
            <person name="Harris M."/>
            <person name="Harris N.L."/>
            <person name="Harvey D.A."/>
            <person name="Heiman T.J."/>
            <person name="Hernandez J.R."/>
            <person name="Houck J."/>
            <person name="Hostin D."/>
            <person name="Houston K.A."/>
            <person name="Howland T.J."/>
            <person name="Wei M.-H."/>
            <person name="Ibegwam C."/>
            <person name="Jalali M."/>
            <person name="Kalush F."/>
            <person name="Karpen G.H."/>
            <person name="Ke Z."/>
            <person name="Kennison J.A."/>
            <person name="Ketchum K.A."/>
            <person name="Kimmel B.E."/>
            <person name="Kodira C.D."/>
            <person name="Kraft C.L."/>
            <person name="Kravitz S."/>
            <person name="Kulp D."/>
            <person name="Lai Z."/>
            <person name="Lasko P."/>
            <person name="Lei Y."/>
            <person name="Levitsky A.A."/>
            <person name="Li J.H."/>
            <person name="Li Z."/>
            <person name="Liang Y."/>
            <person name="Lin X."/>
            <person name="Liu X."/>
            <person name="Mattei B."/>
            <person name="McIntosh T.C."/>
            <person name="McLeod M.P."/>
            <person name="McPherson D."/>
            <person name="Merkulov G."/>
            <person name="Milshina N.V."/>
            <person name="Mobarry C."/>
            <person name="Morris J."/>
            <person name="Moshrefi A."/>
            <person name="Mount S.M."/>
            <person name="Moy M."/>
            <person name="Murphy B."/>
            <person name="Murphy L."/>
            <person name="Muzny D.M."/>
            <person name="Nelson D.L."/>
            <person name="Nelson D.R."/>
            <person name="Nelson K.A."/>
            <person name="Nixon K."/>
            <person name="Nusskern D.R."/>
            <person name="Pacleb J.M."/>
            <person name="Palazzolo M."/>
            <person name="Pittman G.S."/>
            <person name="Pan S."/>
            <person name="Pollard J."/>
            <person name="Puri V."/>
            <person name="Reese M.G."/>
            <person name="Reinert K."/>
            <person name="Remington K."/>
            <person name="Saunders R.D.C."/>
            <person name="Scheeler F."/>
            <person name="Shen H."/>
            <person name="Shue B.C."/>
            <person name="Siden-Kiamos I."/>
            <person name="Simpson M."/>
            <person name="Skupski M.P."/>
            <person name="Smith T.J."/>
            <person name="Spier E."/>
            <person name="Spradling A.C."/>
            <person name="Stapleton M."/>
            <person name="Strong R."/>
            <person name="Sun E."/>
            <person name="Svirskas R."/>
            <person name="Tector C."/>
            <person name="Turner R."/>
            <person name="Venter E."/>
            <person name="Wang A.H."/>
            <person name="Wang X."/>
            <person name="Wang Z.-Y."/>
            <person name="Wassarman D.A."/>
            <person name="Weinstock G.M."/>
            <person name="Weissenbach J."/>
            <person name="Williams S.M."/>
            <person name="Woodage T."/>
            <person name="Worley K.C."/>
            <person name="Wu D."/>
            <person name="Yang S."/>
            <person name="Yao Q.A."/>
            <person name="Ye J."/>
            <person name="Yeh R.-F."/>
            <person name="Zaveri J.S."/>
            <person name="Zhan M."/>
            <person name="Zhang G."/>
            <person name="Zhao Q."/>
            <person name="Zheng L."/>
            <person name="Zheng X.H."/>
            <person name="Zhong F.N."/>
            <person name="Zhong W."/>
            <person name="Zhou X."/>
            <person name="Zhu S.C."/>
            <person name="Zhu X."/>
            <person name="Smith H.O."/>
            <person name="Gibbs R.A."/>
            <person name="Myers E.W."/>
            <person name="Rubin G.M."/>
            <person name="Venter J.C."/>
        </authorList>
    </citation>
    <scope>NUCLEOTIDE SEQUENCE [LARGE SCALE GENOMIC DNA]</scope>
    <source>
        <strain evidence="3">Berkeley</strain>
    </source>
</reference>
<reference evidence="8" key="3">
    <citation type="journal article" date="2002" name="Genome Biol.">
        <title>Annotation of the Drosophila melanogaster euchromatic genome: a systematic review.</title>
        <authorList>
            <person name="Misra S."/>
            <person name="Crosby M.A."/>
            <person name="Mungall C.J."/>
            <person name="Matthews B.B."/>
            <person name="Campbell K.S."/>
            <person name="Hradecky P."/>
            <person name="Huang Y."/>
            <person name="Kaminker J.S."/>
            <person name="Millburn G.H."/>
            <person name="Prochnik S.E."/>
            <person name="Smith C.D."/>
            <person name="Tupy J.L."/>
            <person name="Whitfield E.J."/>
            <person name="Bayraktaroglu L."/>
            <person name="Berman B.P."/>
            <person name="Bettencourt B.R."/>
            <person name="Celniker S.E."/>
            <person name="de Grey A.D.N.J."/>
            <person name="Drysdale R.A."/>
            <person name="Harris N.L."/>
            <person name="Richter J."/>
            <person name="Russo S."/>
            <person name="Schroeder A.J."/>
            <person name="Shu S.Q."/>
            <person name="Stapleton M."/>
            <person name="Yamada C."/>
            <person name="Ashburner M."/>
            <person name="Gelbart W.M."/>
            <person name="Rubin G.M."/>
            <person name="Lewis S.E."/>
        </authorList>
    </citation>
    <scope>GENOME REANNOTATION</scope>
    <scope>ALTERNATIVE SPLICING</scope>
    <source>
        <strain>Berkeley</strain>
    </source>
</reference>
<reference evidence="10" key="4">
    <citation type="submission" date="2005-08" db="EMBL/GenBank/DDBJ databases">
        <authorList>
            <person name="Stapleton M."/>
            <person name="Carlson J.W."/>
            <person name="Chavez C."/>
            <person name="Frise E."/>
            <person name="George R.A."/>
            <person name="Pacleb J.M."/>
            <person name="Park S."/>
            <person name="Wan K.H."/>
            <person name="Yu C."/>
            <person name="Celniker S.E."/>
        </authorList>
    </citation>
    <scope>NUCLEOTIDE SEQUENCE [LARGE SCALE MRNA]</scope>
    <source>
        <strain>Berkeley</strain>
    </source>
</reference>
<reference key="5">
    <citation type="journal article" date="2003" name="Mol. Cell. Biol.">
        <title>Two Drosophila Ada2 homologues function in different multiprotein complexes.</title>
        <authorList>
            <person name="Kusch T."/>
            <person name="Guelman S."/>
            <person name="Abmayr S.M."/>
            <person name="Workman J.L."/>
        </authorList>
    </citation>
    <scope>FUNCTION</scope>
</reference>
<reference key="6">
    <citation type="journal article" date="2010" name="Mol. Genet. Genomics">
        <title>The dissociable RPB4 subunit of RNA Pol II has vital functions in Drosophila.</title>
        <authorList>
            <person name="Pankotai T."/>
            <person name="Ujfaludi Z."/>
            <person name="Vamos E."/>
            <person name="Suri K."/>
            <person name="Boros I.M."/>
        </authorList>
    </citation>
    <scope>SUBCELLULAR LOCATION</scope>
    <scope>DEVELOPMENTAL STAGE</scope>
    <scope>INDUCTION BY HEAT SHOCK</scope>
</reference>
<organism>
    <name type="scientific">Drosophila melanogaster</name>
    <name type="common">Fruit fly</name>
    <dbReference type="NCBI Taxonomy" id="7227"/>
    <lineage>
        <taxon>Eukaryota</taxon>
        <taxon>Metazoa</taxon>
        <taxon>Ecdysozoa</taxon>
        <taxon>Arthropoda</taxon>
        <taxon>Hexapoda</taxon>
        <taxon>Insecta</taxon>
        <taxon>Pterygota</taxon>
        <taxon>Neoptera</taxon>
        <taxon>Endopterygota</taxon>
        <taxon>Diptera</taxon>
        <taxon>Brachycera</taxon>
        <taxon>Muscomorpha</taxon>
        <taxon>Ephydroidea</taxon>
        <taxon>Drosophilidae</taxon>
        <taxon>Drosophila</taxon>
        <taxon>Sophophora</taxon>
    </lineage>
</organism>
<gene>
    <name evidence="7 11" type="primary">Polr2D</name>
    <name evidence="7" type="synonym">Rpb4</name>
    <name evidence="11" type="ORF">CG43662</name>
</gene>
<feature type="chain" id="PRO_0000283732" description="DNA-directed RNA polymerase II subunit Rpb4">
    <location>
        <begin position="1"/>
        <end position="139"/>
    </location>
</feature>
<feature type="sequence conflict" description="In Ref. 1; AAN88031/AAN88032." evidence="8" ref="1">
    <original>LRQ</original>
    <variation>ARE</variation>
    <location>
        <begin position="124"/>
        <end position="126"/>
    </location>
</feature>
<accession>Q9VEA5</accession>
<accession>Q4V3P8</accession>
<accession>Q8I0A4</accession>
<protein>
    <recommendedName>
        <fullName evidence="7">DNA-directed RNA polymerase II subunit Rpb4</fullName>
    </recommendedName>
    <alternativeName>
        <fullName evidence="11">RNA polymerase II subunit D</fullName>
    </alternativeName>
</protein>
<comment type="function">
    <text evidence="4 5">DNA-dependent RNA polymerase catalyzes the transcription of DNA into RNA using the four ribonucleoside triphosphates as substrates. Associates with POLR2G.</text>
</comment>
<comment type="subunit">
    <text evidence="1">RNA polymerase II consists of 12 different subunits.</text>
</comment>
<comment type="subcellular location">
    <subcellularLocation>
        <location evidence="4">Nucleus</location>
    </subcellularLocation>
    <subcellularLocation>
        <location evidence="6">Chromosome</location>
    </subcellularLocation>
</comment>
<comment type="alternative products">
    <event type="alternative splicing"/>
    <isoform>
        <id>Q9VEA5-1</id>
        <name evidence="3">D</name>
        <sequence type="displayed"/>
    </isoform>
    <isoform>
        <id>Q7KSD8-1</id>
        <name>B</name>
        <sequence type="external"/>
    </isoform>
    <isoform>
        <id>Q7KSD8-2</id>
        <name>A</name>
        <sequence type="external"/>
    </isoform>
    <isoform>
        <id>Q7KSD8-3</id>
        <name evidence="4">C</name>
        <name evidence="4">ADA2A-SV2</name>
        <sequence type="external"/>
    </isoform>
    <isoform>
        <id>Q7KSD8-4</id>
        <name evidence="4">E</name>
        <name evidence="4">ADA2A-SV1</name>
        <sequence type="external"/>
    </isoform>
</comment>
<comment type="developmental stage">
    <text evidence="6">During development expression peaks in embryos, decreases sharply in L1 larvae and then remains low throughout larval development.</text>
</comment>
<comment type="induction">
    <text evidence="6">Under heat shock conditions, up-regulated in early larvae and then expression levels appear to return to normal during the L2/L3 and pupal stages. In second instar larvae, down-regulated 1 hr after starvation and then remains low until at least 4 hr after nutritional starvation.</text>
</comment>
<comment type="miscellaneous">
    <text evidence="6 8">This protein is produced by a bicistronic gene which also produces the Ada2a protein by alternative splicing (PubMed:19921261). Three distinct zinc-containing RNA polymerases are found in eukaryotic nuclei: polymerase I for the ribosomal RNA precursor, polymerase II for the mRNA precursor, and polymerase III for 5S and tRNA genes (Probable).</text>
</comment>
<comment type="similarity">
    <text evidence="2">Belongs to the eukaryotic RPB4 RNA polymerase subunit family.</text>
</comment>
<evidence type="ECO:0000250" key="1">
    <source>
        <dbReference type="UniProtKB" id="O15514"/>
    </source>
</evidence>
<evidence type="ECO:0000255" key="2"/>
<evidence type="ECO:0000269" key="3">
    <source>
    </source>
</evidence>
<evidence type="ECO:0000269" key="4">
    <source>
    </source>
</evidence>
<evidence type="ECO:0000269" key="5">
    <source>
    </source>
</evidence>
<evidence type="ECO:0000269" key="6">
    <source>
    </source>
</evidence>
<evidence type="ECO:0000303" key="7">
    <source>
    </source>
</evidence>
<evidence type="ECO:0000305" key="8"/>
<evidence type="ECO:0000312" key="9">
    <source>
        <dbReference type="EMBL" id="AAN88031.1"/>
    </source>
</evidence>
<evidence type="ECO:0000312" key="10">
    <source>
        <dbReference type="EMBL" id="AAY51562.1"/>
    </source>
</evidence>
<evidence type="ECO:0000312" key="11">
    <source>
        <dbReference type="FlyBase" id="FBgn0263757"/>
    </source>
</evidence>
<proteinExistence type="evidence at transcript level"/>
<sequence>MSFMNPVDMVDEDAADLQFPKEFENAETLLISEVHMLLDHRKRQNESADEEQEFSEVFMKTYAYTDSFRKFKNKETIMSARSLLMQKKLHKFELAALGNLCPEAPEEAKALIPSLEGRFEDEELRQILDDIGTKRSLQY</sequence>
<keyword id="KW-0025">Alternative splicing</keyword>
<keyword id="KW-0158">Chromosome</keyword>
<keyword id="KW-0240">DNA-directed RNA polymerase</keyword>
<keyword id="KW-0539">Nucleus</keyword>
<keyword id="KW-1185">Reference proteome</keyword>
<keyword id="KW-0804">Transcription</keyword>
<dbReference type="EMBL" id="AF544019">
    <property type="protein sequence ID" value="AAN88031.1"/>
    <property type="molecule type" value="mRNA"/>
</dbReference>
<dbReference type="EMBL" id="AF544020">
    <property type="protein sequence ID" value="AAN88032.1"/>
    <property type="molecule type" value="mRNA"/>
</dbReference>
<dbReference type="EMBL" id="AE014297">
    <property type="protein sequence ID" value="AAF55522.5"/>
    <property type="molecule type" value="Genomic_DNA"/>
</dbReference>
<dbReference type="EMBL" id="BT022168">
    <property type="protein sequence ID" value="AAY51562.1"/>
    <property type="molecule type" value="mRNA"/>
</dbReference>
<dbReference type="EMBL" id="BT023308">
    <property type="protein sequence ID" value="AAY55724.1"/>
    <property type="molecule type" value="mRNA"/>
</dbReference>
<dbReference type="EMBL" id="BT023309">
    <property type="protein sequence ID" value="AAY55725.1"/>
    <property type="molecule type" value="mRNA"/>
</dbReference>
<dbReference type="RefSeq" id="NP_001014633.2">
    <molecule id="Q9VEA5-1"/>
    <property type="nucleotide sequence ID" value="NM_001014633.3"/>
</dbReference>
<dbReference type="SMR" id="Q9VEA5"/>
<dbReference type="BioGRID" id="2593107">
    <property type="interactions" value="2"/>
</dbReference>
<dbReference type="ComplexPortal" id="CPX-2625">
    <property type="entry name" value="DNA-directed RNA polymerase II complex"/>
</dbReference>
<dbReference type="FunCoup" id="Q9VEA5">
    <property type="interactions" value="2036"/>
</dbReference>
<dbReference type="IntAct" id="Q9VEA5">
    <property type="interactions" value="7"/>
</dbReference>
<dbReference type="STRING" id="7227.FBpp0302530"/>
<dbReference type="PaxDb" id="7227-FBpp0302530"/>
<dbReference type="DNASU" id="14462484"/>
<dbReference type="EnsemblMetazoa" id="FBtr0310379">
    <molecule id="Q9VEA5-1"/>
    <property type="protein sequence ID" value="FBpp0302530"/>
    <property type="gene ID" value="FBgn0263757"/>
</dbReference>
<dbReference type="GeneID" id="14462484"/>
<dbReference type="KEGG" id="dme:Dmel_CG43662"/>
<dbReference type="UCSC" id="CG33520-RA">
    <molecule id="Q9VEA5-1"/>
    <property type="organism name" value="d. melanogaster"/>
</dbReference>
<dbReference type="AGR" id="FB:FBgn0263757"/>
<dbReference type="CTD" id="5433"/>
<dbReference type="FlyBase" id="FBgn0263757">
    <property type="gene designation" value="Polr2D"/>
</dbReference>
<dbReference type="VEuPathDB" id="VectorBase:FBgn0263757"/>
<dbReference type="eggNOG" id="KOG2351">
    <property type="taxonomic scope" value="Eukaryota"/>
</dbReference>
<dbReference type="GeneTree" id="ENSGT00390000004912"/>
<dbReference type="HOGENOM" id="CLU_110332_2_1_1"/>
<dbReference type="InParanoid" id="Q9VEA5"/>
<dbReference type="OMA" id="HRKTQNE"/>
<dbReference type="OrthoDB" id="2186918at2759"/>
<dbReference type="PhylomeDB" id="Q9VEA5"/>
<dbReference type="Reactome" id="R-DME-112382">
    <property type="pathway name" value="Formation of RNA Pol II elongation complex"/>
</dbReference>
<dbReference type="Reactome" id="R-DME-113418">
    <property type="pathway name" value="Formation of the Early Elongation Complex"/>
</dbReference>
<dbReference type="Reactome" id="R-DME-5578749">
    <property type="pathway name" value="Transcriptional regulation by small RNAs"/>
</dbReference>
<dbReference type="Reactome" id="R-DME-674695">
    <property type="pathway name" value="RNA Polymerase II Pre-transcription Events"/>
</dbReference>
<dbReference type="Reactome" id="R-DME-6781823">
    <property type="pathway name" value="Formation of TC-NER Pre-Incision Complex"/>
</dbReference>
<dbReference type="Reactome" id="R-DME-6782135">
    <property type="pathway name" value="Dual incision in TC-NER"/>
</dbReference>
<dbReference type="Reactome" id="R-DME-6782210">
    <property type="pathway name" value="Gap-filling DNA repair synthesis and ligation in TC-NER"/>
</dbReference>
<dbReference type="Reactome" id="R-DME-6796648">
    <property type="pathway name" value="TP53 Regulates Transcription of DNA Repair Genes"/>
</dbReference>
<dbReference type="Reactome" id="R-DME-6807505">
    <property type="pathway name" value="RNA polymerase II transcribes snRNA genes"/>
</dbReference>
<dbReference type="Reactome" id="R-DME-72086">
    <property type="pathway name" value="mRNA Capping"/>
</dbReference>
<dbReference type="Reactome" id="R-DME-72163">
    <property type="pathway name" value="mRNA Splicing - Major Pathway"/>
</dbReference>
<dbReference type="Reactome" id="R-DME-72165">
    <property type="pathway name" value="mRNA Splicing - Minor Pathway"/>
</dbReference>
<dbReference type="Reactome" id="R-DME-72203">
    <property type="pathway name" value="Processing of Capped Intron-Containing Pre-mRNA"/>
</dbReference>
<dbReference type="Reactome" id="R-DME-73776">
    <property type="pathway name" value="RNA Polymerase II Promoter Escape"/>
</dbReference>
<dbReference type="Reactome" id="R-DME-73779">
    <property type="pathway name" value="RNA Polymerase II Transcription Pre-Initiation And Promoter Opening"/>
</dbReference>
<dbReference type="Reactome" id="R-DME-75953">
    <property type="pathway name" value="RNA Polymerase II Transcription Initiation"/>
</dbReference>
<dbReference type="Reactome" id="R-DME-75955">
    <property type="pathway name" value="RNA Polymerase II Transcription Elongation"/>
</dbReference>
<dbReference type="Reactome" id="R-DME-76042">
    <property type="pathway name" value="RNA Polymerase II Transcription Initiation And Promoter Clearance"/>
</dbReference>
<dbReference type="Reactome" id="R-DME-77075">
    <property type="pathway name" value="RNA Pol II CTD phosphorylation and interaction with CE"/>
</dbReference>
<dbReference type="Reactome" id="R-DME-9018519">
    <property type="pathway name" value="Estrogen-dependent gene expression"/>
</dbReference>
<dbReference type="BioGRID-ORCS" id="14462484">
    <property type="hits" value="1 hit in 1 CRISPR screen"/>
</dbReference>
<dbReference type="GenomeRNAi" id="14462484"/>
<dbReference type="Proteomes" id="UP000000803">
    <property type="component" value="Chromosome 3R"/>
</dbReference>
<dbReference type="Bgee" id="FBgn0263757">
    <property type="expression patterns" value="Expressed in ovary and 14 other cell types or tissues"/>
</dbReference>
<dbReference type="GO" id="GO:0005700">
    <property type="term" value="C:polytene chromosome"/>
    <property type="evidence" value="ECO:0000314"/>
    <property type="project" value="FlyBase"/>
</dbReference>
<dbReference type="GO" id="GO:0005705">
    <property type="term" value="C:polytene chromosome interband"/>
    <property type="evidence" value="ECO:0000314"/>
    <property type="project" value="FlyBase"/>
</dbReference>
<dbReference type="GO" id="GO:0005703">
    <property type="term" value="C:polytene chromosome puff"/>
    <property type="evidence" value="ECO:0000314"/>
    <property type="project" value="UniProtKB"/>
</dbReference>
<dbReference type="GO" id="GO:0005665">
    <property type="term" value="C:RNA polymerase II, core complex"/>
    <property type="evidence" value="ECO:0000314"/>
    <property type="project" value="UniProtKB"/>
</dbReference>
<dbReference type="GO" id="GO:0000166">
    <property type="term" value="F:nucleotide binding"/>
    <property type="evidence" value="ECO:0007669"/>
    <property type="project" value="InterPro"/>
</dbReference>
<dbReference type="GO" id="GO:0031369">
    <property type="term" value="F:translation initiation factor binding"/>
    <property type="evidence" value="ECO:0000318"/>
    <property type="project" value="GO_Central"/>
</dbReference>
<dbReference type="GO" id="GO:0006366">
    <property type="term" value="P:transcription by RNA polymerase II"/>
    <property type="evidence" value="ECO:0000314"/>
    <property type="project" value="UniProtKB"/>
</dbReference>
<dbReference type="GO" id="GO:0006367">
    <property type="term" value="P:transcription initiation at RNA polymerase II promoter"/>
    <property type="evidence" value="ECO:0000318"/>
    <property type="project" value="GO_Central"/>
</dbReference>
<dbReference type="FunFam" id="1.20.1250.40:FF:000001">
    <property type="entry name" value="DNA-directed RNA polymerase II subunit RPB4"/>
    <property type="match status" value="1"/>
</dbReference>
<dbReference type="Gene3D" id="1.20.1250.40">
    <property type="match status" value="1"/>
</dbReference>
<dbReference type="InterPro" id="IPR010997">
    <property type="entry name" value="HRDC-like_sf"/>
</dbReference>
<dbReference type="InterPro" id="IPR006590">
    <property type="entry name" value="RNA_pol_Rpb4/RPC9_core"/>
</dbReference>
<dbReference type="InterPro" id="IPR045222">
    <property type="entry name" value="Rpb4-like"/>
</dbReference>
<dbReference type="InterPro" id="IPR005574">
    <property type="entry name" value="Rpb4/RPC9"/>
</dbReference>
<dbReference type="InterPro" id="IPR038324">
    <property type="entry name" value="Rpb4/RPC9_sf"/>
</dbReference>
<dbReference type="PANTHER" id="PTHR21297">
    <property type="entry name" value="DNA-DIRECTED RNA POLYMERASE II"/>
    <property type="match status" value="1"/>
</dbReference>
<dbReference type="Pfam" id="PF03874">
    <property type="entry name" value="RNA_pol_Rpb4"/>
    <property type="match status" value="1"/>
</dbReference>
<dbReference type="SMART" id="SM00657">
    <property type="entry name" value="RPOL4c"/>
    <property type="match status" value="1"/>
</dbReference>
<dbReference type="SUPFAM" id="SSF47819">
    <property type="entry name" value="HRDC-like"/>
    <property type="match status" value="1"/>
</dbReference>